<proteinExistence type="predicted"/>
<name>Y352_TREPA</name>
<feature type="chain" id="PRO_0000202239" description="Uncharacterized protein TP_0352">
    <location>
        <begin position="1"/>
        <end position="85"/>
    </location>
</feature>
<sequence length="85" mass="9663">MREKEGGVVNDDFHYEVTRNWGTLSTSGNGWSLELKSISWNGRPEKYDIRAWSPDKSKMGKGVTLTRAEIVALRDLLNSMSLDPY</sequence>
<keyword id="KW-1185">Reference proteome</keyword>
<accession>O83371</accession>
<dbReference type="EMBL" id="AE000520">
    <property type="protein sequence ID" value="AAC65352.1"/>
    <property type="molecule type" value="Genomic_DNA"/>
</dbReference>
<dbReference type="PIR" id="F71333">
    <property type="entry name" value="F71333"/>
</dbReference>
<dbReference type="RefSeq" id="WP_010881800.1">
    <property type="nucleotide sequence ID" value="NC_021490.2"/>
</dbReference>
<dbReference type="SMR" id="O83371"/>
<dbReference type="IntAct" id="O83371">
    <property type="interactions" value="1"/>
</dbReference>
<dbReference type="STRING" id="243276.TP_0352"/>
<dbReference type="EnsemblBacteria" id="AAC65352">
    <property type="protein sequence ID" value="AAC65352"/>
    <property type="gene ID" value="TP_0352"/>
</dbReference>
<dbReference type="KEGG" id="tpa:TP_0352"/>
<dbReference type="KEGG" id="tpw:TPANIC_0352"/>
<dbReference type="eggNOG" id="COG4443">
    <property type="taxonomic scope" value="Bacteria"/>
</dbReference>
<dbReference type="HOGENOM" id="CLU_180137_1_0_12"/>
<dbReference type="OrthoDB" id="7067273at2"/>
<dbReference type="Proteomes" id="UP000000811">
    <property type="component" value="Chromosome"/>
</dbReference>
<dbReference type="GO" id="GO:0003677">
    <property type="term" value="F:DNA binding"/>
    <property type="evidence" value="ECO:0007669"/>
    <property type="project" value="InterPro"/>
</dbReference>
<dbReference type="GO" id="GO:0006355">
    <property type="term" value="P:regulation of DNA-templated transcription"/>
    <property type="evidence" value="ECO:0007669"/>
    <property type="project" value="InterPro"/>
</dbReference>
<dbReference type="Gene3D" id="2.30.31.70">
    <property type="match status" value="1"/>
</dbReference>
<dbReference type="InterPro" id="IPR017154">
    <property type="entry name" value="PC4-like"/>
</dbReference>
<dbReference type="InterPro" id="IPR003173">
    <property type="entry name" value="PC4_C"/>
</dbReference>
<dbReference type="Pfam" id="PF02229">
    <property type="entry name" value="PC4"/>
    <property type="match status" value="1"/>
</dbReference>
<dbReference type="PIRSF" id="PIRSF037246">
    <property type="entry name" value="UCP037246"/>
    <property type="match status" value="1"/>
</dbReference>
<organism>
    <name type="scientific">Treponema pallidum (strain Nichols)</name>
    <dbReference type="NCBI Taxonomy" id="243276"/>
    <lineage>
        <taxon>Bacteria</taxon>
        <taxon>Pseudomonadati</taxon>
        <taxon>Spirochaetota</taxon>
        <taxon>Spirochaetia</taxon>
        <taxon>Spirochaetales</taxon>
        <taxon>Treponemataceae</taxon>
        <taxon>Treponema</taxon>
    </lineage>
</organism>
<gene>
    <name type="ordered locus">TP_0352</name>
</gene>
<reference key="1">
    <citation type="journal article" date="1998" name="Science">
        <title>Complete genome sequence of Treponema pallidum, the syphilis spirochete.</title>
        <authorList>
            <person name="Fraser C.M."/>
            <person name="Norris S.J."/>
            <person name="Weinstock G.M."/>
            <person name="White O."/>
            <person name="Sutton G.G."/>
            <person name="Dodson R.J."/>
            <person name="Gwinn M.L."/>
            <person name="Hickey E.K."/>
            <person name="Clayton R.A."/>
            <person name="Ketchum K.A."/>
            <person name="Sodergren E."/>
            <person name="Hardham J.M."/>
            <person name="McLeod M.P."/>
            <person name="Salzberg S.L."/>
            <person name="Peterson J.D."/>
            <person name="Khalak H.G."/>
            <person name="Richardson D.L."/>
            <person name="Howell J.K."/>
            <person name="Chidambaram M."/>
            <person name="Utterback T.R."/>
            <person name="McDonald L.A."/>
            <person name="Artiach P."/>
            <person name="Bowman C."/>
            <person name="Cotton M.D."/>
            <person name="Fujii C."/>
            <person name="Garland S.A."/>
            <person name="Hatch B."/>
            <person name="Horst K."/>
            <person name="Roberts K.M."/>
            <person name="Sandusky M."/>
            <person name="Weidman J.F."/>
            <person name="Smith H.O."/>
            <person name="Venter J.C."/>
        </authorList>
    </citation>
    <scope>NUCLEOTIDE SEQUENCE [LARGE SCALE GENOMIC DNA]</scope>
    <source>
        <strain>Nichols</strain>
    </source>
</reference>
<protein>
    <recommendedName>
        <fullName>Uncharacterized protein TP_0352</fullName>
    </recommendedName>
</protein>